<reference key="1">
    <citation type="submission" date="2007-11" db="EMBL/GenBank/DDBJ databases">
        <title>Complete sequence of chromosome of Shewanella baltica OS195.</title>
        <authorList>
            <consortium name="US DOE Joint Genome Institute"/>
            <person name="Copeland A."/>
            <person name="Lucas S."/>
            <person name="Lapidus A."/>
            <person name="Barry K."/>
            <person name="Glavina del Rio T."/>
            <person name="Dalin E."/>
            <person name="Tice H."/>
            <person name="Pitluck S."/>
            <person name="Chain P."/>
            <person name="Malfatti S."/>
            <person name="Shin M."/>
            <person name="Vergez L."/>
            <person name="Schmutz J."/>
            <person name="Larimer F."/>
            <person name="Land M."/>
            <person name="Hauser L."/>
            <person name="Kyrpides N."/>
            <person name="Kim E."/>
            <person name="Brettar I."/>
            <person name="Rodrigues J."/>
            <person name="Konstantinidis K."/>
            <person name="Klappenbach J."/>
            <person name="Hofle M."/>
            <person name="Tiedje J."/>
            <person name="Richardson P."/>
        </authorList>
    </citation>
    <scope>NUCLEOTIDE SEQUENCE [LARGE SCALE GENOMIC DNA]</scope>
    <source>
        <strain>OS195</strain>
    </source>
</reference>
<protein>
    <recommendedName>
        <fullName evidence="1">Dual-specificity RNA methyltransferase RlmN</fullName>
        <ecNumber evidence="1">2.1.1.192</ecNumber>
    </recommendedName>
    <alternativeName>
        <fullName evidence="1">23S rRNA (adenine(2503)-C(2))-methyltransferase</fullName>
    </alternativeName>
    <alternativeName>
        <fullName evidence="1">23S rRNA m2A2503 methyltransferase</fullName>
    </alternativeName>
    <alternativeName>
        <fullName evidence="1">Ribosomal RNA large subunit methyltransferase N</fullName>
    </alternativeName>
    <alternativeName>
        <fullName evidence="1">tRNA (adenine(37)-C(2))-methyltransferase</fullName>
    </alternativeName>
    <alternativeName>
        <fullName evidence="1">tRNA m2A37 methyltransferase</fullName>
    </alternativeName>
</protein>
<keyword id="KW-0004">4Fe-4S</keyword>
<keyword id="KW-0963">Cytoplasm</keyword>
<keyword id="KW-1015">Disulfide bond</keyword>
<keyword id="KW-0408">Iron</keyword>
<keyword id="KW-0411">Iron-sulfur</keyword>
<keyword id="KW-0479">Metal-binding</keyword>
<keyword id="KW-0489">Methyltransferase</keyword>
<keyword id="KW-0698">rRNA processing</keyword>
<keyword id="KW-0949">S-adenosyl-L-methionine</keyword>
<keyword id="KW-0808">Transferase</keyword>
<keyword id="KW-0819">tRNA processing</keyword>
<proteinExistence type="inferred from homology"/>
<gene>
    <name evidence="1" type="primary">rlmN</name>
    <name type="ordered locus">Sbal195_3151</name>
</gene>
<name>RLMN_SHEB9</name>
<organism>
    <name type="scientific">Shewanella baltica (strain OS195)</name>
    <dbReference type="NCBI Taxonomy" id="399599"/>
    <lineage>
        <taxon>Bacteria</taxon>
        <taxon>Pseudomonadati</taxon>
        <taxon>Pseudomonadota</taxon>
        <taxon>Gammaproteobacteria</taxon>
        <taxon>Alteromonadales</taxon>
        <taxon>Shewanellaceae</taxon>
        <taxon>Shewanella</taxon>
    </lineage>
</organism>
<accession>A9KXL1</accession>
<sequence length="373" mass="41683">MSEKKINLLDLDRKAMRALFADMGEKPFRADQLMKWLYHFGVSDFEEMTNINKVLRQKLAARCEIVAPEISSFQKSTDGTIKFAINVGQGQEVETVYIPEDDRATLCVSSQVGCALECTFCSTGQQGFNRNLTVSEIVGQIWRVSHFLGFAKDTGERPITNVVMMGMGEPLLNLANVIPAMDIMLDDFGFSLSKRRVTLSTSGVVPALDKLGDAIDVALAVSIHAPNDELRDILVPINKKYPLDEFLAGIRRYIAKSNANRGRVTVEYVMLDHINDSTDQAHELAKLMKDTPCKVNLIPFNPYPGSPYGRSSNSRIDRFSKVLMEYGFTVIVRKTRGDDIDAACGQLAGDIRDRTKRLAKKRMQENQISVTMN</sequence>
<dbReference type="EC" id="2.1.1.192" evidence="1"/>
<dbReference type="EMBL" id="CP000891">
    <property type="protein sequence ID" value="ABX50313.1"/>
    <property type="molecule type" value="Genomic_DNA"/>
</dbReference>
<dbReference type="RefSeq" id="WP_006082485.1">
    <property type="nucleotide sequence ID" value="NC_009997.1"/>
</dbReference>
<dbReference type="SMR" id="A9KXL1"/>
<dbReference type="KEGG" id="sbn:Sbal195_3151"/>
<dbReference type="HOGENOM" id="CLU_029101_2_0_6"/>
<dbReference type="Proteomes" id="UP000000770">
    <property type="component" value="Chromosome"/>
</dbReference>
<dbReference type="GO" id="GO:0005737">
    <property type="term" value="C:cytoplasm"/>
    <property type="evidence" value="ECO:0007669"/>
    <property type="project" value="UniProtKB-SubCell"/>
</dbReference>
<dbReference type="GO" id="GO:0051539">
    <property type="term" value="F:4 iron, 4 sulfur cluster binding"/>
    <property type="evidence" value="ECO:0007669"/>
    <property type="project" value="UniProtKB-UniRule"/>
</dbReference>
<dbReference type="GO" id="GO:0046872">
    <property type="term" value="F:metal ion binding"/>
    <property type="evidence" value="ECO:0007669"/>
    <property type="project" value="UniProtKB-KW"/>
</dbReference>
<dbReference type="GO" id="GO:0070040">
    <property type="term" value="F:rRNA (adenine(2503)-C2-)-methyltransferase activity"/>
    <property type="evidence" value="ECO:0007669"/>
    <property type="project" value="UniProtKB-UniRule"/>
</dbReference>
<dbReference type="GO" id="GO:0019843">
    <property type="term" value="F:rRNA binding"/>
    <property type="evidence" value="ECO:0007669"/>
    <property type="project" value="UniProtKB-UniRule"/>
</dbReference>
<dbReference type="GO" id="GO:0002935">
    <property type="term" value="F:tRNA (adenine(37)-C2)-methyltransferase activity"/>
    <property type="evidence" value="ECO:0007669"/>
    <property type="project" value="UniProtKB-UniRule"/>
</dbReference>
<dbReference type="GO" id="GO:0000049">
    <property type="term" value="F:tRNA binding"/>
    <property type="evidence" value="ECO:0007669"/>
    <property type="project" value="UniProtKB-UniRule"/>
</dbReference>
<dbReference type="GO" id="GO:0070475">
    <property type="term" value="P:rRNA base methylation"/>
    <property type="evidence" value="ECO:0007669"/>
    <property type="project" value="UniProtKB-UniRule"/>
</dbReference>
<dbReference type="GO" id="GO:0030488">
    <property type="term" value="P:tRNA methylation"/>
    <property type="evidence" value="ECO:0007669"/>
    <property type="project" value="UniProtKB-UniRule"/>
</dbReference>
<dbReference type="CDD" id="cd01335">
    <property type="entry name" value="Radical_SAM"/>
    <property type="match status" value="1"/>
</dbReference>
<dbReference type="FunFam" id="1.10.150.530:FF:000003">
    <property type="entry name" value="Dual-specificity RNA methyltransferase RlmN"/>
    <property type="match status" value="1"/>
</dbReference>
<dbReference type="FunFam" id="3.20.20.70:FF:000008">
    <property type="entry name" value="Dual-specificity RNA methyltransferase RlmN"/>
    <property type="match status" value="1"/>
</dbReference>
<dbReference type="Gene3D" id="1.10.150.530">
    <property type="match status" value="1"/>
</dbReference>
<dbReference type="Gene3D" id="3.20.20.70">
    <property type="entry name" value="Aldolase class I"/>
    <property type="match status" value="1"/>
</dbReference>
<dbReference type="HAMAP" id="MF_01849">
    <property type="entry name" value="RNA_methyltr_RlmN"/>
    <property type="match status" value="1"/>
</dbReference>
<dbReference type="InterPro" id="IPR013785">
    <property type="entry name" value="Aldolase_TIM"/>
</dbReference>
<dbReference type="InterPro" id="IPR040072">
    <property type="entry name" value="Methyltransferase_A"/>
</dbReference>
<dbReference type="InterPro" id="IPR048641">
    <property type="entry name" value="RlmN_N"/>
</dbReference>
<dbReference type="InterPro" id="IPR027492">
    <property type="entry name" value="RNA_MTrfase_RlmN"/>
</dbReference>
<dbReference type="InterPro" id="IPR004383">
    <property type="entry name" value="rRNA_lsu_MTrfase_RlmN/Cfr"/>
</dbReference>
<dbReference type="InterPro" id="IPR007197">
    <property type="entry name" value="rSAM"/>
</dbReference>
<dbReference type="NCBIfam" id="NF008396">
    <property type="entry name" value="PRK11194.1"/>
    <property type="match status" value="1"/>
</dbReference>
<dbReference type="NCBIfam" id="TIGR00048">
    <property type="entry name" value="rRNA_mod_RlmN"/>
    <property type="match status" value="1"/>
</dbReference>
<dbReference type="PANTHER" id="PTHR30544">
    <property type="entry name" value="23S RRNA METHYLTRANSFERASE"/>
    <property type="match status" value="1"/>
</dbReference>
<dbReference type="PANTHER" id="PTHR30544:SF5">
    <property type="entry name" value="RADICAL SAM CORE DOMAIN-CONTAINING PROTEIN"/>
    <property type="match status" value="1"/>
</dbReference>
<dbReference type="Pfam" id="PF04055">
    <property type="entry name" value="Radical_SAM"/>
    <property type="match status" value="1"/>
</dbReference>
<dbReference type="Pfam" id="PF21016">
    <property type="entry name" value="RlmN_N"/>
    <property type="match status" value="1"/>
</dbReference>
<dbReference type="PIRSF" id="PIRSF006004">
    <property type="entry name" value="CHP00048"/>
    <property type="match status" value="1"/>
</dbReference>
<dbReference type="SFLD" id="SFLDF00275">
    <property type="entry name" value="adenosine_C2_methyltransferase"/>
    <property type="match status" value="1"/>
</dbReference>
<dbReference type="SFLD" id="SFLDG01062">
    <property type="entry name" value="methyltransferase_(Class_A)"/>
    <property type="match status" value="1"/>
</dbReference>
<dbReference type="SUPFAM" id="SSF102114">
    <property type="entry name" value="Radical SAM enzymes"/>
    <property type="match status" value="1"/>
</dbReference>
<dbReference type="PROSITE" id="PS51918">
    <property type="entry name" value="RADICAL_SAM"/>
    <property type="match status" value="1"/>
</dbReference>
<feature type="chain" id="PRO_0000350395" description="Dual-specificity RNA methyltransferase RlmN">
    <location>
        <begin position="1"/>
        <end position="373"/>
    </location>
</feature>
<feature type="domain" description="Radical SAM core" evidence="2">
    <location>
        <begin position="100"/>
        <end position="339"/>
    </location>
</feature>
<feature type="active site" description="Proton acceptor" evidence="1">
    <location>
        <position position="94"/>
    </location>
</feature>
<feature type="active site" description="S-methylcysteine intermediate" evidence="1">
    <location>
        <position position="344"/>
    </location>
</feature>
<feature type="binding site" evidence="1">
    <location>
        <position position="114"/>
    </location>
    <ligand>
        <name>[4Fe-4S] cluster</name>
        <dbReference type="ChEBI" id="CHEBI:49883"/>
        <note>4Fe-4S-S-AdoMet</note>
    </ligand>
</feature>
<feature type="binding site" evidence="1">
    <location>
        <position position="118"/>
    </location>
    <ligand>
        <name>[4Fe-4S] cluster</name>
        <dbReference type="ChEBI" id="CHEBI:49883"/>
        <note>4Fe-4S-S-AdoMet</note>
    </ligand>
</feature>
<feature type="binding site" evidence="1">
    <location>
        <position position="121"/>
    </location>
    <ligand>
        <name>[4Fe-4S] cluster</name>
        <dbReference type="ChEBI" id="CHEBI:49883"/>
        <note>4Fe-4S-S-AdoMet</note>
    </ligand>
</feature>
<feature type="binding site" evidence="1">
    <location>
        <begin position="168"/>
        <end position="169"/>
    </location>
    <ligand>
        <name>S-adenosyl-L-methionine</name>
        <dbReference type="ChEBI" id="CHEBI:59789"/>
    </ligand>
</feature>
<feature type="binding site" evidence="1">
    <location>
        <position position="200"/>
    </location>
    <ligand>
        <name>S-adenosyl-L-methionine</name>
        <dbReference type="ChEBI" id="CHEBI:59789"/>
    </ligand>
</feature>
<feature type="binding site" evidence="1">
    <location>
        <begin position="222"/>
        <end position="224"/>
    </location>
    <ligand>
        <name>S-adenosyl-L-methionine</name>
        <dbReference type="ChEBI" id="CHEBI:59789"/>
    </ligand>
</feature>
<feature type="binding site" evidence="1">
    <location>
        <position position="301"/>
    </location>
    <ligand>
        <name>S-adenosyl-L-methionine</name>
        <dbReference type="ChEBI" id="CHEBI:59789"/>
    </ligand>
</feature>
<feature type="disulfide bond" description="(transient)" evidence="1">
    <location>
        <begin position="107"/>
        <end position="344"/>
    </location>
</feature>
<evidence type="ECO:0000255" key="1">
    <source>
        <dbReference type="HAMAP-Rule" id="MF_01849"/>
    </source>
</evidence>
<evidence type="ECO:0000255" key="2">
    <source>
        <dbReference type="PROSITE-ProRule" id="PRU01266"/>
    </source>
</evidence>
<comment type="function">
    <text evidence="1">Specifically methylates position 2 of adenine 2503 in 23S rRNA and position 2 of adenine 37 in tRNAs. m2A2503 modification seems to play a crucial role in the proofreading step occurring at the peptidyl transferase center and thus would serve to optimize ribosomal fidelity.</text>
</comment>
<comment type="catalytic activity">
    <reaction evidence="1">
        <text>adenosine(2503) in 23S rRNA + 2 reduced [2Fe-2S]-[ferredoxin] + 2 S-adenosyl-L-methionine = 2-methyladenosine(2503) in 23S rRNA + 5'-deoxyadenosine + L-methionine + 2 oxidized [2Fe-2S]-[ferredoxin] + S-adenosyl-L-homocysteine</text>
        <dbReference type="Rhea" id="RHEA:42916"/>
        <dbReference type="Rhea" id="RHEA-COMP:10000"/>
        <dbReference type="Rhea" id="RHEA-COMP:10001"/>
        <dbReference type="Rhea" id="RHEA-COMP:10152"/>
        <dbReference type="Rhea" id="RHEA-COMP:10282"/>
        <dbReference type="ChEBI" id="CHEBI:17319"/>
        <dbReference type="ChEBI" id="CHEBI:33737"/>
        <dbReference type="ChEBI" id="CHEBI:33738"/>
        <dbReference type="ChEBI" id="CHEBI:57844"/>
        <dbReference type="ChEBI" id="CHEBI:57856"/>
        <dbReference type="ChEBI" id="CHEBI:59789"/>
        <dbReference type="ChEBI" id="CHEBI:74411"/>
        <dbReference type="ChEBI" id="CHEBI:74497"/>
        <dbReference type="EC" id="2.1.1.192"/>
    </reaction>
</comment>
<comment type="catalytic activity">
    <reaction evidence="1">
        <text>adenosine(37) in tRNA + 2 reduced [2Fe-2S]-[ferredoxin] + 2 S-adenosyl-L-methionine = 2-methyladenosine(37) in tRNA + 5'-deoxyadenosine + L-methionine + 2 oxidized [2Fe-2S]-[ferredoxin] + S-adenosyl-L-homocysteine</text>
        <dbReference type="Rhea" id="RHEA:43332"/>
        <dbReference type="Rhea" id="RHEA-COMP:10000"/>
        <dbReference type="Rhea" id="RHEA-COMP:10001"/>
        <dbReference type="Rhea" id="RHEA-COMP:10162"/>
        <dbReference type="Rhea" id="RHEA-COMP:10485"/>
        <dbReference type="ChEBI" id="CHEBI:17319"/>
        <dbReference type="ChEBI" id="CHEBI:33737"/>
        <dbReference type="ChEBI" id="CHEBI:33738"/>
        <dbReference type="ChEBI" id="CHEBI:57844"/>
        <dbReference type="ChEBI" id="CHEBI:57856"/>
        <dbReference type="ChEBI" id="CHEBI:59789"/>
        <dbReference type="ChEBI" id="CHEBI:74411"/>
        <dbReference type="ChEBI" id="CHEBI:74497"/>
        <dbReference type="EC" id="2.1.1.192"/>
    </reaction>
</comment>
<comment type="cofactor">
    <cofactor evidence="1">
        <name>[4Fe-4S] cluster</name>
        <dbReference type="ChEBI" id="CHEBI:49883"/>
    </cofactor>
    <text evidence="1">Binds 1 [4Fe-4S] cluster. The cluster is coordinated with 3 cysteines and an exchangeable S-adenosyl-L-methionine.</text>
</comment>
<comment type="subcellular location">
    <subcellularLocation>
        <location evidence="1">Cytoplasm</location>
    </subcellularLocation>
</comment>
<comment type="miscellaneous">
    <text evidence="1">Reaction proceeds by a ping-pong mechanism involving intermediate methylation of a conserved cysteine residue.</text>
</comment>
<comment type="similarity">
    <text evidence="1">Belongs to the radical SAM superfamily. RlmN family.</text>
</comment>